<comment type="function">
    <text evidence="2 3 4">Component of the kinetochore, a multiprotein complex that assembles on centromeric DNA and attaches chromosomes to spindle microtubules, mediating chromosome segregation and sister chromatid segregation during meiosis and mitosis. Component of the inner kinetochore COMA complex, which connects centromere-associated proteins and the outer kinetochore. COMA interacts with other inner kinetochore proteins to form the inner kinetochore constitutive centromere-associated network (CCAN), which serves as a structural platform for outer kinetochore assembly.</text>
</comment>
<comment type="subunit">
    <text evidence="1 2 3">Component of the heterotetrameric kinetochore subcomplex COMA, which consists of fta2, fta7, mal2 and mis17 (By similarity). The COMA subcomplex is part of a larger constitutive centromere-associated network (CCAN) (also known as central kinetochore Sim4 complex in fission yeast), which is composed of at least cnl2, cnp3, cnp20, fta1, fta2, fta3, fta4, fta6, fta7, mal2, mhf1, mhf2, mis6, mis15, mis17, sim4 and wip1 (PubMed:12242294, PubMed:16079914).</text>
</comment>
<comment type="subcellular location">
    <subcellularLocation>
        <location>Nucleus</location>
    </subcellularLocation>
    <subcellularLocation>
        <location>Chromosome</location>
        <location>Centromere</location>
        <location>Kinetochore</location>
    </subcellularLocation>
    <subcellularLocation>
        <location>Chromosome</location>
        <location>Centromere</location>
    </subcellularLocation>
</comment>
<comment type="similarity">
    <text evidence="5">Belongs to the CENP-O/MCM21 family.</text>
</comment>
<dbReference type="EMBL" id="X92349">
    <property type="protein sequence ID" value="CAA63106.1"/>
    <property type="molecule type" value="Genomic_DNA"/>
</dbReference>
<dbReference type="EMBL" id="CU329670">
    <property type="protein sequence ID" value="CAB61780.1"/>
    <property type="molecule type" value="Genomic_DNA"/>
</dbReference>
<dbReference type="PIR" id="T43411">
    <property type="entry name" value="T43411"/>
</dbReference>
<dbReference type="RefSeq" id="NP_594474.1">
    <property type="nucleotide sequence ID" value="NM_001019903.2"/>
</dbReference>
<dbReference type="SMR" id="Q10290"/>
<dbReference type="BioGRID" id="279187">
    <property type="interactions" value="25"/>
</dbReference>
<dbReference type="FunCoup" id="Q10290">
    <property type="interactions" value="5"/>
</dbReference>
<dbReference type="IntAct" id="Q10290">
    <property type="interactions" value="1"/>
</dbReference>
<dbReference type="STRING" id="284812.Q10290"/>
<dbReference type="iPTMnet" id="Q10290"/>
<dbReference type="PaxDb" id="4896-SPAC25B8.14.1"/>
<dbReference type="EnsemblFungi" id="SPAC25B8.14.1">
    <property type="protein sequence ID" value="SPAC25B8.14.1:pep"/>
    <property type="gene ID" value="SPAC25B8.14"/>
</dbReference>
<dbReference type="GeneID" id="2542737"/>
<dbReference type="KEGG" id="spo:2542737"/>
<dbReference type="PomBase" id="SPAC25B8.14">
    <property type="gene designation" value="mal2"/>
</dbReference>
<dbReference type="VEuPathDB" id="FungiDB:SPAC25B8.14"/>
<dbReference type="HOGENOM" id="CLU_966948_0_0_1"/>
<dbReference type="InParanoid" id="Q10290"/>
<dbReference type="OMA" id="WKARFFC"/>
<dbReference type="PRO" id="PR:Q10290"/>
<dbReference type="Proteomes" id="UP000002485">
    <property type="component" value="Chromosome I"/>
</dbReference>
<dbReference type="GO" id="GO:0000779">
    <property type="term" value="C:condensed chromosome, centromeric region"/>
    <property type="evidence" value="ECO:0000314"/>
    <property type="project" value="PomBase"/>
</dbReference>
<dbReference type="GO" id="GO:0005829">
    <property type="term" value="C:cytosol"/>
    <property type="evidence" value="ECO:0007005"/>
    <property type="project" value="PomBase"/>
</dbReference>
<dbReference type="GO" id="GO:0000776">
    <property type="term" value="C:kinetochore"/>
    <property type="evidence" value="ECO:0000314"/>
    <property type="project" value="PomBase"/>
</dbReference>
<dbReference type="GO" id="GO:0031511">
    <property type="term" value="C:Mis6-Sim4 complex"/>
    <property type="evidence" value="ECO:0000314"/>
    <property type="project" value="PomBase"/>
</dbReference>
<dbReference type="GO" id="GO:0005634">
    <property type="term" value="C:nucleus"/>
    <property type="evidence" value="ECO:0000314"/>
    <property type="project" value="PomBase"/>
</dbReference>
<dbReference type="GO" id="GO:0051301">
    <property type="term" value="P:cell division"/>
    <property type="evidence" value="ECO:0007669"/>
    <property type="project" value="UniProtKB-KW"/>
</dbReference>
<dbReference type="GO" id="GO:0034080">
    <property type="term" value="P:CENP-A containing chromatin assembly"/>
    <property type="evidence" value="ECO:0000305"/>
    <property type="project" value="PomBase"/>
</dbReference>
<dbReference type="GO" id="GO:0000070">
    <property type="term" value="P:mitotic sister chromatid segregation"/>
    <property type="evidence" value="ECO:0000305"/>
    <property type="project" value="PomBase"/>
</dbReference>
<dbReference type="CDD" id="cd23834">
    <property type="entry name" value="DRWD-C_Mcm21"/>
    <property type="match status" value="1"/>
</dbReference>
<dbReference type="InterPro" id="IPR018464">
    <property type="entry name" value="CENP-O"/>
</dbReference>
<dbReference type="PANTHER" id="PTHR14582:SF1">
    <property type="entry name" value="CENTROMERE PROTEIN O"/>
    <property type="match status" value="1"/>
</dbReference>
<dbReference type="PANTHER" id="PTHR14582">
    <property type="entry name" value="INNER KINETOCHORE SUBUNIT MAL2"/>
    <property type="match status" value="1"/>
</dbReference>
<dbReference type="Pfam" id="PF09496">
    <property type="entry name" value="CENP-O"/>
    <property type="match status" value="1"/>
</dbReference>
<sequence length="303" mass="34515">MDDEEGNATLIDEISVLEARRDVLLDELKSLDNATLSDLVQKPELSKNLSVNNEFLKETPLNQPALHYDRLSGISFFQPNDPEELSRKTLLVKNKKTGAIETAPSIPLLGVRFDIMLNPVNIGFTNLSENPISSASGMDEELEGGNRFDVPYYIIFRVFHDSFALYKYTIPSFLNIQEWADEYLTGKNPERFRIFLWKVDKLLTAYICRKNALLQINKSLTIDGTNISANLSCTHLVIQIPKVIQATLVCSSESTRVVKSRIYQYSDENWKRDHRLELSLLDNKRWVNILVSHLTAPESHASL</sequence>
<accession>Q10290</accession>
<feature type="chain" id="PRO_0000084556" description="Inner kinetochore subunit mal2">
    <location>
        <begin position="1"/>
        <end position="303"/>
    </location>
</feature>
<evidence type="ECO:0000250" key="1">
    <source>
        <dbReference type="UniProtKB" id="Q02732"/>
    </source>
</evidence>
<evidence type="ECO:0000269" key="2">
    <source>
    </source>
</evidence>
<evidence type="ECO:0000269" key="3">
    <source>
    </source>
</evidence>
<evidence type="ECO:0000269" key="4">
    <source>
    </source>
</evidence>
<evidence type="ECO:0000305" key="5"/>
<protein>
    <recommendedName>
        <fullName>Inner kinetochore subunit mal2</fullName>
    </recommendedName>
    <alternativeName>
        <fullName>CENP-O homolog</fullName>
    </alternativeName>
    <alternativeName>
        <fullName>Constitutive centromere-associated network protein mal2</fullName>
    </alternativeName>
    <alternativeName>
        <fullName>Sim4 complex subunit mal2</fullName>
    </alternativeName>
</protein>
<name>CENPO_SCHPO</name>
<proteinExistence type="evidence at protein level"/>
<gene>
    <name type="primary">mal2</name>
    <name type="ORF">SPAC25B8.14</name>
</gene>
<reference key="1">
    <citation type="journal article" date="1996" name="Mol. Cell. Biol.">
        <title>Fission yeast mal2+ is required for chromosome segregation.</title>
        <authorList>
            <person name="Fleig U."/>
            <person name="Sen-Gupta M."/>
            <person name="Hegemann J.H."/>
        </authorList>
    </citation>
    <scope>NUCLEOTIDE SEQUENCE [GENOMIC DNA]</scope>
    <scope>FUNCTION</scope>
    <scope>SUBCELLULAR LOCATION</scope>
</reference>
<reference key="2">
    <citation type="journal article" date="2002" name="Nature">
        <title>The genome sequence of Schizosaccharomyces pombe.</title>
        <authorList>
            <person name="Wood V."/>
            <person name="Gwilliam R."/>
            <person name="Rajandream M.A."/>
            <person name="Lyne M.H."/>
            <person name="Lyne R."/>
            <person name="Stewart A."/>
            <person name="Sgouros J.G."/>
            <person name="Peat N."/>
            <person name="Hayles J."/>
            <person name="Baker S.G."/>
            <person name="Basham D."/>
            <person name="Bowman S."/>
            <person name="Brooks K."/>
            <person name="Brown D."/>
            <person name="Brown S."/>
            <person name="Chillingworth T."/>
            <person name="Churcher C.M."/>
            <person name="Collins M."/>
            <person name="Connor R."/>
            <person name="Cronin A."/>
            <person name="Davis P."/>
            <person name="Feltwell T."/>
            <person name="Fraser A."/>
            <person name="Gentles S."/>
            <person name="Goble A."/>
            <person name="Hamlin N."/>
            <person name="Harris D.E."/>
            <person name="Hidalgo J."/>
            <person name="Hodgson G."/>
            <person name="Holroyd S."/>
            <person name="Hornsby T."/>
            <person name="Howarth S."/>
            <person name="Huckle E.J."/>
            <person name="Hunt S."/>
            <person name="Jagels K."/>
            <person name="James K.D."/>
            <person name="Jones L."/>
            <person name="Jones M."/>
            <person name="Leather S."/>
            <person name="McDonald S."/>
            <person name="McLean J."/>
            <person name="Mooney P."/>
            <person name="Moule S."/>
            <person name="Mungall K.L."/>
            <person name="Murphy L.D."/>
            <person name="Niblett D."/>
            <person name="Odell C."/>
            <person name="Oliver K."/>
            <person name="O'Neil S."/>
            <person name="Pearson D."/>
            <person name="Quail M.A."/>
            <person name="Rabbinowitsch E."/>
            <person name="Rutherford K.M."/>
            <person name="Rutter S."/>
            <person name="Saunders D."/>
            <person name="Seeger K."/>
            <person name="Sharp S."/>
            <person name="Skelton J."/>
            <person name="Simmonds M.N."/>
            <person name="Squares R."/>
            <person name="Squares S."/>
            <person name="Stevens K."/>
            <person name="Taylor K."/>
            <person name="Taylor R.G."/>
            <person name="Tivey A."/>
            <person name="Walsh S.V."/>
            <person name="Warren T."/>
            <person name="Whitehead S."/>
            <person name="Woodward J.R."/>
            <person name="Volckaert G."/>
            <person name="Aert R."/>
            <person name="Robben J."/>
            <person name="Grymonprez B."/>
            <person name="Weltjens I."/>
            <person name="Vanstreels E."/>
            <person name="Rieger M."/>
            <person name="Schaefer M."/>
            <person name="Mueller-Auer S."/>
            <person name="Gabel C."/>
            <person name="Fuchs M."/>
            <person name="Duesterhoeft A."/>
            <person name="Fritzc C."/>
            <person name="Holzer E."/>
            <person name="Moestl D."/>
            <person name="Hilbert H."/>
            <person name="Borzym K."/>
            <person name="Langer I."/>
            <person name="Beck A."/>
            <person name="Lehrach H."/>
            <person name="Reinhardt R."/>
            <person name="Pohl T.M."/>
            <person name="Eger P."/>
            <person name="Zimmermann W."/>
            <person name="Wedler H."/>
            <person name="Wambutt R."/>
            <person name="Purnelle B."/>
            <person name="Goffeau A."/>
            <person name="Cadieu E."/>
            <person name="Dreano S."/>
            <person name="Gloux S."/>
            <person name="Lelaure V."/>
            <person name="Mottier S."/>
            <person name="Galibert F."/>
            <person name="Aves S.J."/>
            <person name="Xiang Z."/>
            <person name="Hunt C."/>
            <person name="Moore K."/>
            <person name="Hurst S.M."/>
            <person name="Lucas M."/>
            <person name="Rochet M."/>
            <person name="Gaillardin C."/>
            <person name="Tallada V.A."/>
            <person name="Garzon A."/>
            <person name="Thode G."/>
            <person name="Daga R.R."/>
            <person name="Cruzado L."/>
            <person name="Jimenez J."/>
            <person name="Sanchez M."/>
            <person name="del Rey F."/>
            <person name="Benito J."/>
            <person name="Dominguez A."/>
            <person name="Revuelta J.L."/>
            <person name="Moreno S."/>
            <person name="Armstrong J."/>
            <person name="Forsburg S.L."/>
            <person name="Cerutti L."/>
            <person name="Lowe T."/>
            <person name="McCombie W.R."/>
            <person name="Paulsen I."/>
            <person name="Potashkin J."/>
            <person name="Shpakovski G.V."/>
            <person name="Ussery D."/>
            <person name="Barrell B.G."/>
            <person name="Nurse P."/>
        </authorList>
    </citation>
    <scope>NUCLEOTIDE SEQUENCE [LARGE SCALE GENOMIC DNA]</scope>
    <source>
        <strain>972 / ATCC 24843</strain>
    </source>
</reference>
<reference key="3">
    <citation type="journal article" date="2002" name="Mol. Cell. Biol.">
        <title>The mal2p protein is an essential component of the fission yeast centromere.</title>
        <authorList>
            <person name="Jin Q.-W."/>
            <person name="Pidoux A.L."/>
            <person name="Decker C."/>
            <person name="Allshire R.C."/>
            <person name="Fleig U."/>
        </authorList>
    </citation>
    <scope>FUNCTION</scope>
    <scope>INTERACTION WITH MIS12</scope>
    <scope>SUBCELLULAR LOCATION</scope>
</reference>
<reference key="4">
    <citation type="journal article" date="2005" name="EMBO J.">
        <title>Molecular analysis of kinetochore architecture in fission yeast.</title>
        <authorList>
            <person name="Liu X."/>
            <person name="McLeod I."/>
            <person name="Anderson S."/>
            <person name="Yates J.R. III"/>
            <person name="He X."/>
        </authorList>
    </citation>
    <scope>FUNCTION</scope>
    <scope>IDENTIFICATION IN THE SIM4 COMPLEX</scope>
</reference>
<reference key="5">
    <citation type="journal article" date="2006" name="Nat. Biotechnol.">
        <title>ORFeome cloning and global analysis of protein localization in the fission yeast Schizosaccharomyces pombe.</title>
        <authorList>
            <person name="Matsuyama A."/>
            <person name="Arai R."/>
            <person name="Yashiroda Y."/>
            <person name="Shirai A."/>
            <person name="Kamata A."/>
            <person name="Sekido S."/>
            <person name="Kobayashi Y."/>
            <person name="Hashimoto A."/>
            <person name="Hamamoto M."/>
            <person name="Hiraoka Y."/>
            <person name="Horinouchi S."/>
            <person name="Yoshida M."/>
        </authorList>
    </citation>
    <scope>SUBCELLULAR LOCATION [LARGE SCALE ANALYSIS]</scope>
</reference>
<keyword id="KW-0131">Cell cycle</keyword>
<keyword id="KW-0132">Cell division</keyword>
<keyword id="KW-0137">Centromere</keyword>
<keyword id="KW-0158">Chromosome</keyword>
<keyword id="KW-0995">Kinetochore</keyword>
<keyword id="KW-0498">Mitosis</keyword>
<keyword id="KW-0539">Nucleus</keyword>
<keyword id="KW-1185">Reference proteome</keyword>
<organism>
    <name type="scientific">Schizosaccharomyces pombe (strain 972 / ATCC 24843)</name>
    <name type="common">Fission yeast</name>
    <dbReference type="NCBI Taxonomy" id="284812"/>
    <lineage>
        <taxon>Eukaryota</taxon>
        <taxon>Fungi</taxon>
        <taxon>Dikarya</taxon>
        <taxon>Ascomycota</taxon>
        <taxon>Taphrinomycotina</taxon>
        <taxon>Schizosaccharomycetes</taxon>
        <taxon>Schizosaccharomycetales</taxon>
        <taxon>Schizosaccharomycetaceae</taxon>
        <taxon>Schizosaccharomyces</taxon>
    </lineage>
</organism>